<sequence length="398" mass="45701">MASTSSTSTDGHLNIRPMVHGSDKKLNFGAYITGLDLNNASDAEVDQLREAILRHKIVVIKGQQAEKPDKNWEMIKKLDPMHHMITQEEFGQLFHPTGEGLIAMLKLATVPTTEHGHIHLMGKGYQGDDHYGLKKLNLGEAFAGNYYSKPLAEEDFRAGVTRFQSWHMDGPLYKVHPPYISSLRFIQLPDGEQTVEWADGSGLSLKTKPGRTAFFSTSQLYDMLTDEERAMVDNSAVEYMYYPYEWIRGCRGNPNGLNVADEGREKPLDAMEEIARDERWTKTYPMVWFNELTKEKSLQVQPNCVRRLLIRRSADQKEPEIIEGPERVREFMNKLQQRIVRPEYVYVGPEEEGDHVFWYNWGMMHSKIDYPIAYGPRIVHQGWIPSHRVPRGPTAVAH</sequence>
<dbReference type="EC" id="1.14.11.-" evidence="4"/>
<dbReference type="EMBL" id="AB570430">
    <property type="protein sequence ID" value="BAJ10703.1"/>
    <property type="molecule type" value="mRNA"/>
</dbReference>
<dbReference type="BioCyc" id="MetaCyc:MONOMER-18715"/>
<dbReference type="GO" id="GO:0051213">
    <property type="term" value="F:dioxygenase activity"/>
    <property type="evidence" value="ECO:0007669"/>
    <property type="project" value="UniProtKB-KW"/>
</dbReference>
<dbReference type="GO" id="GO:0046872">
    <property type="term" value="F:metal ion binding"/>
    <property type="evidence" value="ECO:0007669"/>
    <property type="project" value="UniProtKB-KW"/>
</dbReference>
<dbReference type="Gene3D" id="3.60.130.10">
    <property type="entry name" value="Clavaminate synthase-like"/>
    <property type="match status" value="1"/>
</dbReference>
<dbReference type="InterPro" id="IPR042098">
    <property type="entry name" value="TauD-like_sf"/>
</dbReference>
<dbReference type="InterPro" id="IPR003819">
    <property type="entry name" value="TauD/TfdA-like"/>
</dbReference>
<dbReference type="InterPro" id="IPR051178">
    <property type="entry name" value="TfdA_dioxygenase"/>
</dbReference>
<dbReference type="PANTHER" id="PTHR43779:SF2">
    <property type="entry name" value="ALPHA-KETOGLUTARATE-DEPENDENT XANTHINE DIOXYGENASE XAN1"/>
    <property type="match status" value="1"/>
</dbReference>
<dbReference type="PANTHER" id="PTHR43779">
    <property type="entry name" value="DIOXYGENASE RV0097-RELATED"/>
    <property type="match status" value="1"/>
</dbReference>
<dbReference type="Pfam" id="PF02668">
    <property type="entry name" value="TauD"/>
    <property type="match status" value="1"/>
</dbReference>
<dbReference type="SUPFAM" id="SSF51197">
    <property type="entry name" value="Clavaminate synthase-like"/>
    <property type="match status" value="1"/>
</dbReference>
<feature type="chain" id="PRO_0000445456" description="Alpha-ketoglutarate-dependent dioxygenase bsc9">
    <location>
        <begin position="1"/>
        <end position="398"/>
    </location>
</feature>
<feature type="binding site" evidence="1">
    <location>
        <position position="167"/>
    </location>
    <ligand>
        <name>Fe cation</name>
        <dbReference type="ChEBI" id="CHEBI:24875"/>
        <note>catalytic</note>
    </ligand>
</feature>
<feature type="binding site" evidence="1">
    <location>
        <position position="169"/>
    </location>
    <ligand>
        <name>Fe cation</name>
        <dbReference type="ChEBI" id="CHEBI:24875"/>
        <note>catalytic</note>
    </ligand>
</feature>
<feature type="binding site" evidence="1">
    <location>
        <position position="212"/>
    </location>
    <ligand>
        <name>2-oxoglutarate</name>
        <dbReference type="ChEBI" id="CHEBI:16810"/>
    </ligand>
</feature>
<feature type="binding site" evidence="1">
    <location>
        <position position="365"/>
    </location>
    <ligand>
        <name>Fe cation</name>
        <dbReference type="ChEBI" id="CHEBI:24875"/>
        <note>catalytic</note>
    </ligand>
</feature>
<feature type="binding site" evidence="1">
    <location>
        <position position="377"/>
    </location>
    <ligand>
        <name>2-oxoglutarate</name>
        <dbReference type="ChEBI" id="CHEBI:16810"/>
    </ligand>
</feature>
<proteinExistence type="evidence at protein level"/>
<keyword id="KW-0223">Dioxygenase</keyword>
<keyword id="KW-0408">Iron</keyword>
<keyword id="KW-0479">Metal-binding</keyword>
<keyword id="KW-0560">Oxidoreductase</keyword>
<comment type="function">
    <text evidence="2 3 4 8">Alpha-ketoglutarate dependent dioxygenase; part of the gene cluster that mediates the biosynthesis of the diterpene glucoside brassicicene C (PubMed:21299202). In the first step of the brassicicene C biosynthesis, the bifunctional diterpene synthase bsc8 that possesses both prenyl transferase and terpene cyclase activity, converts isopentenyl diphosphate and dimethylallyl diphosphate into geranylgeranyl diphosphate (GGDP) that is further converted into fusicocca-2,10(14)-diene, the first precursor for brassicicene C (PubMed:19097780). Fusicocca-2,10(14)-diene is then substrate of cytochrome P450 monooxygenase bsc1 for hydroxylation at the C-8 position (PubMed:19700326). Oxidation at C-16 position to aldehyde is then catalyzed by the cytochrome P450 monooyxygenase bsc7, yielding fusicocca-2,10(14)-diene-8-beta,16-diol (PubMed:19700326). Follows the isomerization of the double bond and reduction of aldehyde to alcohol catalyzed by the short-chain dehydrogenase/reductase bsc3 to yield the diol compound fusicocca-1,10(14)-diene-8 beta,16-diol (Probable). The next step is the oxidation at the C-3 position of fusicocca-2,10(14)-diene-8-beta,16-diol catalyzed by the alpha-ketoglutarate dependent dioxygenase bsc9, to produce a triol compound (PubMed:21299202). Methylation of the hydroxy group at position 16 is performed by the methyltransferase bsc6 (PubMed:19097780). 16-O-methylation is followed by oxidation at the C-13 position to ketone and an alkyl shift of the methyl group leads to brassicicene C (Probable). Although the probable acetyltransferase bsc4 is included in the gene cluster, no acetylation reactions are necessary for brassicicene C biosynthesis. However, the fact that brassicicene E, which is a structurally related compound having an acetoxy group at position 12, was previously isolated from another strain of A.brassicicola suggests that the ATCC 96836 strain might also produce a small amount of brassicicene E (Probable).</text>
</comment>
<comment type="cofactor">
    <cofactor evidence="1">
        <name>Fe(2+)</name>
        <dbReference type="ChEBI" id="CHEBI:29033"/>
    </cofactor>
    <text evidence="1">Binds 1 Fe(2+) ion per subunit.</text>
</comment>
<comment type="pathway">
    <text evidence="4">Mycotoxin biosynthesis.</text>
</comment>
<comment type="similarity">
    <text evidence="7">Belongs to the TfdA dioxygenase family.</text>
</comment>
<organism>
    <name type="scientific">Alternaria brassicicola</name>
    <name type="common">Dark leaf spot agent</name>
    <dbReference type="NCBI Taxonomy" id="29001"/>
    <lineage>
        <taxon>Eukaryota</taxon>
        <taxon>Fungi</taxon>
        <taxon>Dikarya</taxon>
        <taxon>Ascomycota</taxon>
        <taxon>Pezizomycotina</taxon>
        <taxon>Dothideomycetes</taxon>
        <taxon>Pleosporomycetidae</taxon>
        <taxon>Pleosporales</taxon>
        <taxon>Pleosporineae</taxon>
        <taxon>Pleosporaceae</taxon>
        <taxon>Alternaria</taxon>
        <taxon>Alternaria sect. Brassicicola</taxon>
    </lineage>
</organism>
<reference key="1">
    <citation type="journal article" date="2011" name="J. Am. Chem. Soc.">
        <title>Dioxygenases, key enzymes to determine the aglycon structures of fusicoccin and brassicicene, diterpene compounds produced by fungi.</title>
        <authorList>
            <person name="Ono Y."/>
            <person name="Minami A."/>
            <person name="Noike M."/>
            <person name="Higuchi Y."/>
            <person name="Toyomasu T."/>
            <person name="Sassa T."/>
            <person name="Kato N."/>
            <person name="Dairi T."/>
        </authorList>
    </citation>
    <scope>NUCLEOTIDE SEQUENCE [MRNA]</scope>
    <scope>FUNCTION</scope>
    <scope>CATALYTIC ACTIVITY</scope>
    <scope>BIOPHYSICOCHEMICAL PROPERTIES</scope>
    <scope>PATHWAY</scope>
    <source>
        <strain>96836</strain>
    </source>
</reference>
<reference key="2">
    <citation type="journal article" date="2009" name="Bioorg. Med. Chem. Lett.">
        <title>Identification and functional analysis of brassicicene C biosynthetic gene cluster in Alternaria brassicicola.</title>
        <authorList>
            <person name="Minami A."/>
            <person name="Tajima N."/>
            <person name="Higuchi Y."/>
            <person name="Toyomasu T."/>
            <person name="Sassa T."/>
            <person name="Kato N."/>
            <person name="Dairi T."/>
        </authorList>
    </citation>
    <scope>FUNCTION</scope>
</reference>
<reference key="3">
    <citation type="journal article" date="2009" name="Bioorg. Med. Chem. Lett.">
        <title>Functional analyses of cytochrome P450 genes responsible for the early steps of brassicicene C biosynthesis.</title>
        <authorList>
            <person name="Hashimoto M."/>
            <person name="Higuchi Y."/>
            <person name="Takahashi S."/>
            <person name="Osada H."/>
            <person name="Sakaki T."/>
            <person name="Toyomasu T."/>
            <person name="Sassa T."/>
            <person name="Kato N."/>
            <person name="Dairi T."/>
        </authorList>
    </citation>
    <scope>FUNCTION</scope>
</reference>
<protein>
    <recommendedName>
        <fullName evidence="6">Alpha-ketoglutarate-dependent dioxygenase bsc9</fullName>
        <ecNumber evidence="4">1.14.11.-</ecNumber>
    </recommendedName>
    <alternativeName>
        <fullName evidence="5">Brassicicene C biosynthetic gene cluster protein 9</fullName>
    </alternativeName>
    <alternativeName>
        <fullName evidence="6">Brassicicene-dioxygenase</fullName>
    </alternativeName>
</protein>
<name>BSC9_ALTBR</name>
<accession>D7UTD1</accession>
<evidence type="ECO:0000250" key="1">
    <source>
        <dbReference type="UniProtKB" id="P37610"/>
    </source>
</evidence>
<evidence type="ECO:0000269" key="2">
    <source>
    </source>
</evidence>
<evidence type="ECO:0000269" key="3">
    <source>
    </source>
</evidence>
<evidence type="ECO:0000269" key="4">
    <source>
    </source>
</evidence>
<evidence type="ECO:0000303" key="5">
    <source>
    </source>
</evidence>
<evidence type="ECO:0000303" key="6">
    <source>
    </source>
</evidence>
<evidence type="ECO:0000305" key="7"/>
<evidence type="ECO:0000305" key="8">
    <source>
    </source>
</evidence>
<gene>
    <name evidence="7" type="primary">bsc7</name>
    <name evidence="6" type="synonym">bc-dox</name>
    <name evidence="5" type="synonym">orf7</name>
</gene>